<gene>
    <name type="primary">ldhD</name>
    <name type="synonym">ddh</name>
    <name type="ordered locus">SAV2524</name>
</gene>
<sequence length="330" mass="36712">MTKIMFFGTRDYEKEMALNWGKKNNVEVTTSKELLSSATVDQLKDYDGVTTMQFGKLENDVYPKLESYGIKQIAQRTAGFDMYDLDLAKKHNIVISNVPSYSPETIAEYSVSIALQLVRRFPDIERRVQTHDFTWQAEIMSKPVKNMTVAIIGTGRIGAATAKIYAGFGATITAYDAYPNKDLDFLTYKDSVKEAIKDADIISLHVPANKESYHLFDKAMFDHVKKGAILVNAARGAVINTPDLIAAVNDGTLLGAAIDTYENEAAYFTNDWTNKDIDDKTLLELIEHERILVTPHIAFFSDEAVQNLVEGGLNAALSVINTGTCETRLN</sequence>
<protein>
    <recommendedName>
        <fullName>D-lactate dehydrogenase</fullName>
        <shortName>D-LDH</shortName>
        <ecNumber>1.1.1.28</ecNumber>
    </recommendedName>
    <alternativeName>
        <fullName>D-specific 2-hydroxyacid dehydrogenase</fullName>
    </alternativeName>
</protein>
<name>LDHD_STAAM</name>
<proteinExistence type="inferred from homology"/>
<dbReference type="EC" id="1.1.1.28"/>
<dbReference type="EMBL" id="BA000017">
    <property type="protein sequence ID" value="BAB58686.1"/>
    <property type="status" value="ALT_INIT"/>
    <property type="molecule type" value="Genomic_DNA"/>
</dbReference>
<dbReference type="RefSeq" id="WP_000161545.1">
    <property type="nucleotide sequence ID" value="NC_002758.2"/>
</dbReference>
<dbReference type="SMR" id="P63940"/>
<dbReference type="KEGG" id="sav:SAV2524"/>
<dbReference type="HOGENOM" id="CLU_019796_1_1_9"/>
<dbReference type="Proteomes" id="UP000002481">
    <property type="component" value="Chromosome"/>
</dbReference>
<dbReference type="GO" id="GO:0008720">
    <property type="term" value="F:D-lactate dehydrogenase activity"/>
    <property type="evidence" value="ECO:0007669"/>
    <property type="project" value="UniProtKB-EC"/>
</dbReference>
<dbReference type="GO" id="GO:0051287">
    <property type="term" value="F:NAD binding"/>
    <property type="evidence" value="ECO:0007669"/>
    <property type="project" value="InterPro"/>
</dbReference>
<dbReference type="CDD" id="cd12186">
    <property type="entry name" value="LDH"/>
    <property type="match status" value="1"/>
</dbReference>
<dbReference type="Gene3D" id="3.40.50.720">
    <property type="entry name" value="NAD(P)-binding Rossmann-like Domain"/>
    <property type="match status" value="2"/>
</dbReference>
<dbReference type="InterPro" id="IPR006139">
    <property type="entry name" value="D-isomer_2_OHA_DH_cat_dom"/>
</dbReference>
<dbReference type="InterPro" id="IPR029753">
    <property type="entry name" value="D-isomer_DH_CS"/>
</dbReference>
<dbReference type="InterPro" id="IPR029752">
    <property type="entry name" value="D-isomer_DH_CS1"/>
</dbReference>
<dbReference type="InterPro" id="IPR006140">
    <property type="entry name" value="D-isomer_DH_NAD-bd"/>
</dbReference>
<dbReference type="InterPro" id="IPR036291">
    <property type="entry name" value="NAD(P)-bd_dom_sf"/>
</dbReference>
<dbReference type="NCBIfam" id="NF006374">
    <property type="entry name" value="PRK08605.1"/>
    <property type="match status" value="1"/>
</dbReference>
<dbReference type="NCBIfam" id="NF009127">
    <property type="entry name" value="PRK12480.1"/>
    <property type="match status" value="1"/>
</dbReference>
<dbReference type="PANTHER" id="PTHR43026">
    <property type="entry name" value="2-HYDROXYACID DEHYDROGENASE HOMOLOG 1-RELATED"/>
    <property type="match status" value="1"/>
</dbReference>
<dbReference type="PANTHER" id="PTHR43026:SF1">
    <property type="entry name" value="2-HYDROXYACID DEHYDROGENASE HOMOLOG 1-RELATED"/>
    <property type="match status" value="1"/>
</dbReference>
<dbReference type="Pfam" id="PF00389">
    <property type="entry name" value="2-Hacid_dh"/>
    <property type="match status" value="1"/>
</dbReference>
<dbReference type="Pfam" id="PF02826">
    <property type="entry name" value="2-Hacid_dh_C"/>
    <property type="match status" value="1"/>
</dbReference>
<dbReference type="SUPFAM" id="SSF52283">
    <property type="entry name" value="Formate/glycerate dehydrogenase catalytic domain-like"/>
    <property type="match status" value="1"/>
</dbReference>
<dbReference type="SUPFAM" id="SSF51735">
    <property type="entry name" value="NAD(P)-binding Rossmann-fold domains"/>
    <property type="match status" value="1"/>
</dbReference>
<dbReference type="PROSITE" id="PS00065">
    <property type="entry name" value="D_2_HYDROXYACID_DH_1"/>
    <property type="match status" value="1"/>
</dbReference>
<dbReference type="PROSITE" id="PS00670">
    <property type="entry name" value="D_2_HYDROXYACID_DH_2"/>
    <property type="match status" value="1"/>
</dbReference>
<dbReference type="PROSITE" id="PS00671">
    <property type="entry name" value="D_2_HYDROXYACID_DH_3"/>
    <property type="match status" value="1"/>
</dbReference>
<organism>
    <name type="scientific">Staphylococcus aureus (strain Mu50 / ATCC 700699)</name>
    <dbReference type="NCBI Taxonomy" id="158878"/>
    <lineage>
        <taxon>Bacteria</taxon>
        <taxon>Bacillati</taxon>
        <taxon>Bacillota</taxon>
        <taxon>Bacilli</taxon>
        <taxon>Bacillales</taxon>
        <taxon>Staphylococcaceae</taxon>
        <taxon>Staphylococcus</taxon>
    </lineage>
</organism>
<keyword id="KW-0520">NAD</keyword>
<keyword id="KW-0560">Oxidoreductase</keyword>
<accession>P63940</accession>
<accession>Q99RB1</accession>
<reference key="1">
    <citation type="journal article" date="2001" name="Lancet">
        <title>Whole genome sequencing of meticillin-resistant Staphylococcus aureus.</title>
        <authorList>
            <person name="Kuroda M."/>
            <person name="Ohta T."/>
            <person name="Uchiyama I."/>
            <person name="Baba T."/>
            <person name="Yuzawa H."/>
            <person name="Kobayashi I."/>
            <person name="Cui L."/>
            <person name="Oguchi A."/>
            <person name="Aoki K."/>
            <person name="Nagai Y."/>
            <person name="Lian J.-Q."/>
            <person name="Ito T."/>
            <person name="Kanamori M."/>
            <person name="Matsumaru H."/>
            <person name="Maruyama A."/>
            <person name="Murakami H."/>
            <person name="Hosoyama A."/>
            <person name="Mizutani-Ui Y."/>
            <person name="Takahashi N.K."/>
            <person name="Sawano T."/>
            <person name="Inoue R."/>
            <person name="Kaito C."/>
            <person name="Sekimizu K."/>
            <person name="Hirakawa H."/>
            <person name="Kuhara S."/>
            <person name="Goto S."/>
            <person name="Yabuzaki J."/>
            <person name="Kanehisa M."/>
            <person name="Yamashita A."/>
            <person name="Oshima K."/>
            <person name="Furuya K."/>
            <person name="Yoshino C."/>
            <person name="Shiba T."/>
            <person name="Hattori M."/>
            <person name="Ogasawara N."/>
            <person name="Hayashi H."/>
            <person name="Hiramatsu K."/>
        </authorList>
    </citation>
    <scope>NUCLEOTIDE SEQUENCE [LARGE SCALE GENOMIC DNA]</scope>
    <source>
        <strain>Mu50 / ATCC 700699</strain>
    </source>
</reference>
<comment type="catalytic activity">
    <reaction>
        <text>(R)-lactate + NAD(+) = pyruvate + NADH + H(+)</text>
        <dbReference type="Rhea" id="RHEA:16369"/>
        <dbReference type="ChEBI" id="CHEBI:15361"/>
        <dbReference type="ChEBI" id="CHEBI:15378"/>
        <dbReference type="ChEBI" id="CHEBI:16004"/>
        <dbReference type="ChEBI" id="CHEBI:57540"/>
        <dbReference type="ChEBI" id="CHEBI:57945"/>
        <dbReference type="EC" id="1.1.1.28"/>
    </reaction>
</comment>
<comment type="similarity">
    <text evidence="3">Belongs to the D-isomer specific 2-hydroxyacid dehydrogenase family.</text>
</comment>
<comment type="sequence caution" evidence="3">
    <conflict type="erroneous initiation">
        <sequence resource="EMBL-CDS" id="BAB58686"/>
    </conflict>
</comment>
<feature type="chain" id="PRO_0000075960" description="D-lactate dehydrogenase">
    <location>
        <begin position="1"/>
        <end position="330"/>
    </location>
</feature>
<feature type="active site" evidence="1">
    <location>
        <position position="235"/>
    </location>
</feature>
<feature type="active site" evidence="1">
    <location>
        <position position="264"/>
    </location>
</feature>
<feature type="active site" description="Proton donor" evidence="1">
    <location>
        <position position="296"/>
    </location>
</feature>
<feature type="binding site" evidence="2">
    <location>
        <begin position="156"/>
        <end position="157"/>
    </location>
    <ligand>
        <name>NAD(+)</name>
        <dbReference type="ChEBI" id="CHEBI:57540"/>
    </ligand>
</feature>
<feature type="binding site" evidence="1">
    <location>
        <position position="176"/>
    </location>
    <ligand>
        <name>NAD(+)</name>
        <dbReference type="ChEBI" id="CHEBI:57540"/>
    </ligand>
</feature>
<feature type="binding site" evidence="2">
    <location>
        <begin position="206"/>
        <end position="207"/>
    </location>
    <ligand>
        <name>NAD(+)</name>
        <dbReference type="ChEBI" id="CHEBI:57540"/>
    </ligand>
</feature>
<feature type="binding site" evidence="2">
    <location>
        <begin position="233"/>
        <end position="235"/>
    </location>
    <ligand>
        <name>NAD(+)</name>
        <dbReference type="ChEBI" id="CHEBI:57540"/>
    </ligand>
</feature>
<feature type="binding site" evidence="2">
    <location>
        <position position="259"/>
    </location>
    <ligand>
        <name>NAD(+)</name>
        <dbReference type="ChEBI" id="CHEBI:57540"/>
    </ligand>
</feature>
<evidence type="ECO:0000250" key="1">
    <source>
        <dbReference type="UniProtKB" id="P26297"/>
    </source>
</evidence>
<evidence type="ECO:0000250" key="2">
    <source>
        <dbReference type="UniProtKB" id="P30901"/>
    </source>
</evidence>
<evidence type="ECO:0000305" key="3"/>